<dbReference type="EMBL" id="AL123456">
    <property type="protein sequence ID" value="CCP44858.1"/>
    <property type="molecule type" value="Genomic_DNA"/>
</dbReference>
<dbReference type="PIR" id="F70766">
    <property type="entry name" value="F70766"/>
</dbReference>
<dbReference type="RefSeq" id="NP_216599.1">
    <property type="nucleotide sequence ID" value="NC_000962.3"/>
</dbReference>
<dbReference type="RefSeq" id="WP_003916935.1">
    <property type="nucleotide sequence ID" value="NZ_NVQJ01000061.1"/>
</dbReference>
<dbReference type="STRING" id="83332.Rv2083"/>
<dbReference type="PaxDb" id="83332-Rv2083"/>
<dbReference type="DNASU" id="887281"/>
<dbReference type="GeneID" id="887281"/>
<dbReference type="KEGG" id="mtu:Rv2083"/>
<dbReference type="KEGG" id="mtv:RVBD_2083"/>
<dbReference type="TubercuList" id="Rv2083"/>
<dbReference type="eggNOG" id="ENOG5032ENV">
    <property type="taxonomic scope" value="Bacteria"/>
</dbReference>
<dbReference type="InParanoid" id="P9WLK3"/>
<dbReference type="OrthoDB" id="4764731at2"/>
<dbReference type="Proteomes" id="UP000001584">
    <property type="component" value="Chromosome"/>
</dbReference>
<dbReference type="GO" id="GO:0005886">
    <property type="term" value="C:plasma membrane"/>
    <property type="evidence" value="ECO:0007005"/>
    <property type="project" value="MTBBASE"/>
</dbReference>
<gene>
    <name type="ordered locus">Rv2083</name>
    <name type="ORF">MTCY49.22</name>
</gene>
<feature type="chain" id="PRO_0000103954" description="Uncharacterized protein Rv2083">
    <location>
        <begin position="1"/>
        <end position="314"/>
    </location>
</feature>
<feature type="transmembrane region" description="Helical" evidence="1">
    <location>
        <begin position="23"/>
        <end position="43"/>
    </location>
</feature>
<feature type="transmembrane region" description="Helical" evidence="1">
    <location>
        <begin position="98"/>
        <end position="118"/>
    </location>
</feature>
<feature type="transmembrane region" description="Helical" evidence="1">
    <location>
        <begin position="221"/>
        <end position="241"/>
    </location>
</feature>
<feature type="region of interest" description="Disordered" evidence="2">
    <location>
        <begin position="165"/>
        <end position="314"/>
    </location>
</feature>
<feature type="compositionally biased region" description="Gly residues" evidence="2">
    <location>
        <begin position="165"/>
        <end position="184"/>
    </location>
</feature>
<feature type="compositionally biased region" description="Pro residues" evidence="2">
    <location>
        <begin position="190"/>
        <end position="202"/>
    </location>
</feature>
<feature type="compositionally biased region" description="Low complexity" evidence="2">
    <location>
        <begin position="203"/>
        <end position="212"/>
    </location>
</feature>
<feature type="compositionally biased region" description="Low complexity" evidence="2">
    <location>
        <begin position="219"/>
        <end position="232"/>
    </location>
</feature>
<feature type="compositionally biased region" description="Basic and acidic residues" evidence="2">
    <location>
        <begin position="294"/>
        <end position="314"/>
    </location>
</feature>
<evidence type="ECO:0000255" key="1"/>
<evidence type="ECO:0000256" key="2">
    <source>
        <dbReference type="SAM" id="MobiDB-lite"/>
    </source>
</evidence>
<evidence type="ECO:0000305" key="3"/>
<name>Y2083_MYCTU</name>
<accession>P9WLK3</accession>
<accession>L0T8R1</accession>
<accession>Q10691</accession>
<sequence>MTSIESHPEQYWAAAGRPGPVPLALGPVHPGGPTLIDLLMALFGLSTNADLGGANADIEGDDTDRRAHAADAARKFSANEANAAEQMQGVGAQGMAQMASGIGGALSGALGGVMGPLTQLPQQAMQAGQGAMQPLMSAMQQAQGADGLAAVDGARLLDSIGGEPGLGSGAGGGDVGGGGAGGTTPTGYLGPPPVPTSSPPTTPAGAPTKSATMPPPGGASPASAHMGAAGMPMVPPGAMGARGEGSGQEKPVEKRLTAPAVPNGQPVKGRLTVPPSAPTTKPTDGKPVVRRRILLPEHKDFGRIAPDEKTDAGE</sequence>
<comment type="subcellular location">
    <subcellularLocation>
        <location evidence="3">Cell membrane</location>
        <topology evidence="3">Multi-pass membrane protein</topology>
    </subcellularLocation>
</comment>
<reference key="1">
    <citation type="journal article" date="1998" name="Nature">
        <title>Deciphering the biology of Mycobacterium tuberculosis from the complete genome sequence.</title>
        <authorList>
            <person name="Cole S.T."/>
            <person name="Brosch R."/>
            <person name="Parkhill J."/>
            <person name="Garnier T."/>
            <person name="Churcher C.M."/>
            <person name="Harris D.E."/>
            <person name="Gordon S.V."/>
            <person name="Eiglmeier K."/>
            <person name="Gas S."/>
            <person name="Barry C.E. III"/>
            <person name="Tekaia F."/>
            <person name="Badcock K."/>
            <person name="Basham D."/>
            <person name="Brown D."/>
            <person name="Chillingworth T."/>
            <person name="Connor R."/>
            <person name="Davies R.M."/>
            <person name="Devlin K."/>
            <person name="Feltwell T."/>
            <person name="Gentles S."/>
            <person name="Hamlin N."/>
            <person name="Holroyd S."/>
            <person name="Hornsby T."/>
            <person name="Jagels K."/>
            <person name="Krogh A."/>
            <person name="McLean J."/>
            <person name="Moule S."/>
            <person name="Murphy L.D."/>
            <person name="Oliver S."/>
            <person name="Osborne J."/>
            <person name="Quail M.A."/>
            <person name="Rajandream M.A."/>
            <person name="Rogers J."/>
            <person name="Rutter S."/>
            <person name="Seeger K."/>
            <person name="Skelton S."/>
            <person name="Squares S."/>
            <person name="Squares R."/>
            <person name="Sulston J.E."/>
            <person name="Taylor K."/>
            <person name="Whitehead S."/>
            <person name="Barrell B.G."/>
        </authorList>
    </citation>
    <scope>NUCLEOTIDE SEQUENCE [LARGE SCALE GENOMIC DNA]</scope>
    <source>
        <strain>ATCC 25618 / H37Rv</strain>
    </source>
</reference>
<keyword id="KW-1003">Cell membrane</keyword>
<keyword id="KW-0472">Membrane</keyword>
<keyword id="KW-1185">Reference proteome</keyword>
<keyword id="KW-0812">Transmembrane</keyword>
<keyword id="KW-1133">Transmembrane helix</keyword>
<protein>
    <recommendedName>
        <fullName>Uncharacterized protein Rv2083</fullName>
    </recommendedName>
</protein>
<proteinExistence type="predicted"/>
<organism>
    <name type="scientific">Mycobacterium tuberculosis (strain ATCC 25618 / H37Rv)</name>
    <dbReference type="NCBI Taxonomy" id="83332"/>
    <lineage>
        <taxon>Bacteria</taxon>
        <taxon>Bacillati</taxon>
        <taxon>Actinomycetota</taxon>
        <taxon>Actinomycetes</taxon>
        <taxon>Mycobacteriales</taxon>
        <taxon>Mycobacteriaceae</taxon>
        <taxon>Mycobacterium</taxon>
        <taxon>Mycobacterium tuberculosis complex</taxon>
    </lineage>
</organism>